<sequence length="285" mass="32561">MSRNFSMRAKVYLKPLVFFQIIDAYDRRPKGDNQVMGTLLGRNKEGHIEITNCFTVPHKEHSENKRIDLDMAYASEVLELNMFAYPNERVLGWFCTGKSVSRSASLIHDYYVRECCEGQPLHLLVDAALKNQRLSTRLYCAVEMGVPGGTKGLMFSLVPLEISNENSDLVALRCIEKQSQQQASKQMERFVPELAQVVDATRDMQHRLDLVLRYINDVLARKKKPDNVVGRSLYAALTAVPLLDSDKFRVMFNTNLRDMLMAITLSTMIKTQLEISEKLSCMQDQ</sequence>
<feature type="chain" id="PRO_0000364304" description="Eukaryotic translation initiation factor 3 subunit F-2">
    <location>
        <begin position="1"/>
        <end position="285"/>
    </location>
</feature>
<feature type="domain" description="MPN" evidence="2">
    <location>
        <begin position="11"/>
        <end position="145"/>
    </location>
</feature>
<accession>A1Z6K7</accession>
<reference key="1">
    <citation type="journal article" date="2000" name="Science">
        <title>The genome sequence of Drosophila melanogaster.</title>
        <authorList>
            <person name="Adams M.D."/>
            <person name="Celniker S.E."/>
            <person name="Holt R.A."/>
            <person name="Evans C.A."/>
            <person name="Gocayne J.D."/>
            <person name="Amanatides P.G."/>
            <person name="Scherer S.E."/>
            <person name="Li P.W."/>
            <person name="Hoskins R.A."/>
            <person name="Galle R.F."/>
            <person name="George R.A."/>
            <person name="Lewis S.E."/>
            <person name="Richards S."/>
            <person name="Ashburner M."/>
            <person name="Henderson S.N."/>
            <person name="Sutton G.G."/>
            <person name="Wortman J.R."/>
            <person name="Yandell M.D."/>
            <person name="Zhang Q."/>
            <person name="Chen L.X."/>
            <person name="Brandon R.C."/>
            <person name="Rogers Y.-H.C."/>
            <person name="Blazej R.G."/>
            <person name="Champe M."/>
            <person name="Pfeiffer B.D."/>
            <person name="Wan K.H."/>
            <person name="Doyle C."/>
            <person name="Baxter E.G."/>
            <person name="Helt G."/>
            <person name="Nelson C.R."/>
            <person name="Miklos G.L.G."/>
            <person name="Abril J.F."/>
            <person name="Agbayani A."/>
            <person name="An H.-J."/>
            <person name="Andrews-Pfannkoch C."/>
            <person name="Baldwin D."/>
            <person name="Ballew R.M."/>
            <person name="Basu A."/>
            <person name="Baxendale J."/>
            <person name="Bayraktaroglu L."/>
            <person name="Beasley E.M."/>
            <person name="Beeson K.Y."/>
            <person name="Benos P.V."/>
            <person name="Berman B.P."/>
            <person name="Bhandari D."/>
            <person name="Bolshakov S."/>
            <person name="Borkova D."/>
            <person name="Botchan M.R."/>
            <person name="Bouck J."/>
            <person name="Brokstein P."/>
            <person name="Brottier P."/>
            <person name="Burtis K.C."/>
            <person name="Busam D.A."/>
            <person name="Butler H."/>
            <person name="Cadieu E."/>
            <person name="Center A."/>
            <person name="Chandra I."/>
            <person name="Cherry J.M."/>
            <person name="Cawley S."/>
            <person name="Dahlke C."/>
            <person name="Davenport L.B."/>
            <person name="Davies P."/>
            <person name="de Pablos B."/>
            <person name="Delcher A."/>
            <person name="Deng Z."/>
            <person name="Mays A.D."/>
            <person name="Dew I."/>
            <person name="Dietz S.M."/>
            <person name="Dodson K."/>
            <person name="Doup L.E."/>
            <person name="Downes M."/>
            <person name="Dugan-Rocha S."/>
            <person name="Dunkov B.C."/>
            <person name="Dunn P."/>
            <person name="Durbin K.J."/>
            <person name="Evangelista C.C."/>
            <person name="Ferraz C."/>
            <person name="Ferriera S."/>
            <person name="Fleischmann W."/>
            <person name="Fosler C."/>
            <person name="Gabrielian A.E."/>
            <person name="Garg N.S."/>
            <person name="Gelbart W.M."/>
            <person name="Glasser K."/>
            <person name="Glodek A."/>
            <person name="Gong F."/>
            <person name="Gorrell J.H."/>
            <person name="Gu Z."/>
            <person name="Guan P."/>
            <person name="Harris M."/>
            <person name="Harris N.L."/>
            <person name="Harvey D.A."/>
            <person name="Heiman T.J."/>
            <person name="Hernandez J.R."/>
            <person name="Houck J."/>
            <person name="Hostin D."/>
            <person name="Houston K.A."/>
            <person name="Howland T.J."/>
            <person name="Wei M.-H."/>
            <person name="Ibegwam C."/>
            <person name="Jalali M."/>
            <person name="Kalush F."/>
            <person name="Karpen G.H."/>
            <person name="Ke Z."/>
            <person name="Kennison J.A."/>
            <person name="Ketchum K.A."/>
            <person name="Kimmel B.E."/>
            <person name="Kodira C.D."/>
            <person name="Kraft C.L."/>
            <person name="Kravitz S."/>
            <person name="Kulp D."/>
            <person name="Lai Z."/>
            <person name="Lasko P."/>
            <person name="Lei Y."/>
            <person name="Levitsky A.A."/>
            <person name="Li J.H."/>
            <person name="Li Z."/>
            <person name="Liang Y."/>
            <person name="Lin X."/>
            <person name="Liu X."/>
            <person name="Mattei B."/>
            <person name="McIntosh T.C."/>
            <person name="McLeod M.P."/>
            <person name="McPherson D."/>
            <person name="Merkulov G."/>
            <person name="Milshina N.V."/>
            <person name="Mobarry C."/>
            <person name="Morris J."/>
            <person name="Moshrefi A."/>
            <person name="Mount S.M."/>
            <person name="Moy M."/>
            <person name="Murphy B."/>
            <person name="Murphy L."/>
            <person name="Muzny D.M."/>
            <person name="Nelson D.L."/>
            <person name="Nelson D.R."/>
            <person name="Nelson K.A."/>
            <person name="Nixon K."/>
            <person name="Nusskern D.R."/>
            <person name="Pacleb J.M."/>
            <person name="Palazzolo M."/>
            <person name="Pittman G.S."/>
            <person name="Pan S."/>
            <person name="Pollard J."/>
            <person name="Puri V."/>
            <person name="Reese M.G."/>
            <person name="Reinert K."/>
            <person name="Remington K."/>
            <person name="Saunders R.D.C."/>
            <person name="Scheeler F."/>
            <person name="Shen H."/>
            <person name="Shue B.C."/>
            <person name="Siden-Kiamos I."/>
            <person name="Simpson M."/>
            <person name="Skupski M.P."/>
            <person name="Smith T.J."/>
            <person name="Spier E."/>
            <person name="Spradling A.C."/>
            <person name="Stapleton M."/>
            <person name="Strong R."/>
            <person name="Sun E."/>
            <person name="Svirskas R."/>
            <person name="Tector C."/>
            <person name="Turner R."/>
            <person name="Venter E."/>
            <person name="Wang A.H."/>
            <person name="Wang X."/>
            <person name="Wang Z.-Y."/>
            <person name="Wassarman D.A."/>
            <person name="Weinstock G.M."/>
            <person name="Weissenbach J."/>
            <person name="Williams S.M."/>
            <person name="Woodage T."/>
            <person name="Worley K.C."/>
            <person name="Wu D."/>
            <person name="Yang S."/>
            <person name="Yao Q.A."/>
            <person name="Ye J."/>
            <person name="Yeh R.-F."/>
            <person name="Zaveri J.S."/>
            <person name="Zhan M."/>
            <person name="Zhang G."/>
            <person name="Zhao Q."/>
            <person name="Zheng L."/>
            <person name="Zheng X.H."/>
            <person name="Zhong F.N."/>
            <person name="Zhong W."/>
            <person name="Zhou X."/>
            <person name="Zhu S.C."/>
            <person name="Zhu X."/>
            <person name="Smith H.O."/>
            <person name="Gibbs R.A."/>
            <person name="Myers E.W."/>
            <person name="Rubin G.M."/>
            <person name="Venter J.C."/>
        </authorList>
    </citation>
    <scope>NUCLEOTIDE SEQUENCE [LARGE SCALE GENOMIC DNA]</scope>
    <source>
        <strain>Berkeley</strain>
    </source>
</reference>
<reference key="2">
    <citation type="journal article" date="2002" name="Genome Biol.">
        <title>Annotation of the Drosophila melanogaster euchromatic genome: a systematic review.</title>
        <authorList>
            <person name="Misra S."/>
            <person name="Crosby M.A."/>
            <person name="Mungall C.J."/>
            <person name="Matthews B.B."/>
            <person name="Campbell K.S."/>
            <person name="Hradecky P."/>
            <person name="Huang Y."/>
            <person name="Kaminker J.S."/>
            <person name="Millburn G.H."/>
            <person name="Prochnik S.E."/>
            <person name="Smith C.D."/>
            <person name="Tupy J.L."/>
            <person name="Whitfield E.J."/>
            <person name="Bayraktaroglu L."/>
            <person name="Berman B.P."/>
            <person name="Bettencourt B.R."/>
            <person name="Celniker S.E."/>
            <person name="de Grey A.D.N.J."/>
            <person name="Drysdale R.A."/>
            <person name="Harris N.L."/>
            <person name="Richter J."/>
            <person name="Russo S."/>
            <person name="Schroeder A.J."/>
            <person name="Shu S.Q."/>
            <person name="Stapleton M."/>
            <person name="Yamada C."/>
            <person name="Ashburner M."/>
            <person name="Gelbart W.M."/>
            <person name="Rubin G.M."/>
            <person name="Lewis S.E."/>
        </authorList>
    </citation>
    <scope>GENOME REANNOTATION</scope>
    <source>
        <strain>Berkeley</strain>
    </source>
</reference>
<dbReference type="EMBL" id="AE013599">
    <property type="protein sequence ID" value="AAF57273.2"/>
    <property type="status" value="ALT_INIT"/>
    <property type="molecule type" value="Genomic_DNA"/>
</dbReference>
<dbReference type="RefSeq" id="NP_610210.2">
    <property type="nucleotide sequence ID" value="NM_136366.3"/>
</dbReference>
<dbReference type="SMR" id="A1Z6K7"/>
<dbReference type="BioGRID" id="61450">
    <property type="interactions" value="3"/>
</dbReference>
<dbReference type="FunCoup" id="A1Z6K7">
    <property type="interactions" value="401"/>
</dbReference>
<dbReference type="IntAct" id="A1Z6K7">
    <property type="interactions" value="2"/>
</dbReference>
<dbReference type="STRING" id="7227.FBpp0085334"/>
<dbReference type="PaxDb" id="7227-FBpp0085334"/>
<dbReference type="DNASU" id="35547"/>
<dbReference type="EnsemblMetazoa" id="FBtr0085990">
    <property type="protein sequence ID" value="FBpp0085334"/>
    <property type="gene ID" value="FBgn0033069"/>
</dbReference>
<dbReference type="GeneID" id="35547"/>
<dbReference type="KEGG" id="dme:Dmel_CG8335"/>
<dbReference type="UCSC" id="CG8335-RA">
    <property type="organism name" value="d. melanogaster"/>
</dbReference>
<dbReference type="AGR" id="FB:FBgn0033069"/>
<dbReference type="CTD" id="35547"/>
<dbReference type="FlyBase" id="FBgn0033069">
    <property type="gene designation" value="eIF3f2"/>
</dbReference>
<dbReference type="VEuPathDB" id="VectorBase:FBgn0033069"/>
<dbReference type="eggNOG" id="KOG2975">
    <property type="taxonomic scope" value="Eukaryota"/>
</dbReference>
<dbReference type="HOGENOM" id="CLU_027018_0_2_1"/>
<dbReference type="InParanoid" id="A1Z6K7"/>
<dbReference type="OMA" id="IEITNCF"/>
<dbReference type="OrthoDB" id="25498at2759"/>
<dbReference type="PhylomeDB" id="A1Z6K7"/>
<dbReference type="BioGRID-ORCS" id="35547">
    <property type="hits" value="0 hits in 1 CRISPR screen"/>
</dbReference>
<dbReference type="GenomeRNAi" id="35547"/>
<dbReference type="PRO" id="PR:A1Z6K7"/>
<dbReference type="Proteomes" id="UP000000803">
    <property type="component" value="Chromosome 2R"/>
</dbReference>
<dbReference type="Bgee" id="FBgn0033069">
    <property type="expression patterns" value="Expressed in spermatocyte in testis and 19 other cell types or tissues"/>
</dbReference>
<dbReference type="ExpressionAtlas" id="A1Z6K7">
    <property type="expression patterns" value="baseline and differential"/>
</dbReference>
<dbReference type="GO" id="GO:0016282">
    <property type="term" value="C:eukaryotic 43S preinitiation complex"/>
    <property type="evidence" value="ECO:0007669"/>
    <property type="project" value="UniProtKB-UniRule"/>
</dbReference>
<dbReference type="GO" id="GO:0033290">
    <property type="term" value="C:eukaryotic 48S preinitiation complex"/>
    <property type="evidence" value="ECO:0007669"/>
    <property type="project" value="UniProtKB-UniRule"/>
</dbReference>
<dbReference type="GO" id="GO:0005852">
    <property type="term" value="C:eukaryotic translation initiation factor 3 complex"/>
    <property type="evidence" value="ECO:0000250"/>
    <property type="project" value="FlyBase"/>
</dbReference>
<dbReference type="GO" id="GO:0071541">
    <property type="term" value="C:eukaryotic translation initiation factor 3 complex, eIF3m"/>
    <property type="evidence" value="ECO:0000318"/>
    <property type="project" value="GO_Central"/>
</dbReference>
<dbReference type="GO" id="GO:0140492">
    <property type="term" value="F:metal-dependent deubiquitinase activity"/>
    <property type="evidence" value="ECO:0000250"/>
    <property type="project" value="FlyBase"/>
</dbReference>
<dbReference type="GO" id="GO:0003743">
    <property type="term" value="F:translation initiation factor activity"/>
    <property type="evidence" value="ECO:0000250"/>
    <property type="project" value="FlyBase"/>
</dbReference>
<dbReference type="GO" id="GO:0031369">
    <property type="term" value="F:translation initiation factor binding"/>
    <property type="evidence" value="ECO:0000318"/>
    <property type="project" value="GO_Central"/>
</dbReference>
<dbReference type="GO" id="GO:0001732">
    <property type="term" value="P:formation of cytoplasmic translation initiation complex"/>
    <property type="evidence" value="ECO:0007669"/>
    <property type="project" value="UniProtKB-UniRule"/>
</dbReference>
<dbReference type="GO" id="GO:0006413">
    <property type="term" value="P:translational initiation"/>
    <property type="evidence" value="ECO:0000250"/>
    <property type="project" value="FlyBase"/>
</dbReference>
<dbReference type="CDD" id="cd08064">
    <property type="entry name" value="MPN_eIF3f"/>
    <property type="match status" value="1"/>
</dbReference>
<dbReference type="FunFam" id="3.40.140.10:FF:000127">
    <property type="entry name" value="Eukaryotic translation initiation factor 3 subunit F-2"/>
    <property type="match status" value="1"/>
</dbReference>
<dbReference type="Gene3D" id="3.40.140.10">
    <property type="entry name" value="Cytidine Deaminase, domain 2"/>
    <property type="match status" value="1"/>
</dbReference>
<dbReference type="HAMAP" id="MF_03005">
    <property type="entry name" value="eIF3f"/>
    <property type="match status" value="1"/>
</dbReference>
<dbReference type="InterPro" id="IPR027531">
    <property type="entry name" value="eIF3f"/>
</dbReference>
<dbReference type="InterPro" id="IPR024969">
    <property type="entry name" value="EIF3F/CSN6-like_C"/>
</dbReference>
<dbReference type="InterPro" id="IPR000555">
    <property type="entry name" value="JAMM/MPN+_dom"/>
</dbReference>
<dbReference type="InterPro" id="IPR037518">
    <property type="entry name" value="MPN"/>
</dbReference>
<dbReference type="PANTHER" id="PTHR10540:SF6">
    <property type="entry name" value="EUKARYOTIC TRANSLATION INITIATION FACTOR 3 SUBUNIT F"/>
    <property type="match status" value="1"/>
</dbReference>
<dbReference type="PANTHER" id="PTHR10540">
    <property type="entry name" value="EUKARYOTIC TRANSLATION INITIATION FACTOR 3 SUBUNIT F-RELATED"/>
    <property type="match status" value="1"/>
</dbReference>
<dbReference type="Pfam" id="PF01398">
    <property type="entry name" value="JAB"/>
    <property type="match status" value="1"/>
</dbReference>
<dbReference type="Pfam" id="PF13012">
    <property type="entry name" value="MitMem_reg"/>
    <property type="match status" value="1"/>
</dbReference>
<dbReference type="SMART" id="SM00232">
    <property type="entry name" value="JAB_MPN"/>
    <property type="match status" value="1"/>
</dbReference>
<dbReference type="PROSITE" id="PS50249">
    <property type="entry name" value="MPN"/>
    <property type="match status" value="1"/>
</dbReference>
<name>EI3F2_DROME</name>
<comment type="function">
    <text evidence="1">Component of the eukaryotic translation initiation factor 3 (eIF-3) complex, which is involved in protein synthesis of a specialized repertoire of mRNAs and, together with other initiation factors, stimulates binding of mRNA and methionyl-tRNAi to the 40S ribosome. The eIF-3 complex specifically targets and initiates translation of a subset of mRNAs involved in cell proliferation.</text>
</comment>
<comment type="subunit">
    <text evidence="1">Component of the eukaryotic translation initiation factor 3 (eIF-3) complex. The eIF-3 complex interacts with pix.</text>
</comment>
<comment type="subcellular location">
    <subcellularLocation>
        <location evidence="1">Cytoplasm</location>
    </subcellularLocation>
</comment>
<comment type="similarity">
    <text evidence="1">Belongs to the eIF-3 subunit F family.</text>
</comment>
<comment type="sequence caution" evidence="3">
    <conflict type="erroneous initiation">
        <sequence resource="EMBL-CDS" id="AAF57273"/>
    </conflict>
</comment>
<evidence type="ECO:0000255" key="1">
    <source>
        <dbReference type="HAMAP-Rule" id="MF_03005"/>
    </source>
</evidence>
<evidence type="ECO:0000255" key="2">
    <source>
        <dbReference type="PROSITE-ProRule" id="PRU01182"/>
    </source>
</evidence>
<evidence type="ECO:0000305" key="3"/>
<evidence type="ECO:0000312" key="4">
    <source>
        <dbReference type="FlyBase" id="FBgn0033069"/>
    </source>
</evidence>
<proteinExistence type="inferred from homology"/>
<gene>
    <name evidence="1" type="primary">eIF3f2</name>
    <name evidence="1" type="synonym">eIF3-S5-2</name>
    <name evidence="4" type="ORF">CG8335</name>
</gene>
<keyword id="KW-0963">Cytoplasm</keyword>
<keyword id="KW-0396">Initiation factor</keyword>
<keyword id="KW-0648">Protein biosynthesis</keyword>
<keyword id="KW-1185">Reference proteome</keyword>
<protein>
    <recommendedName>
        <fullName evidence="1">Eukaryotic translation initiation factor 3 subunit F-2</fullName>
        <shortName evidence="1">eIF3f-2</shortName>
    </recommendedName>
    <alternativeName>
        <fullName evidence="1">Eukaryotic translation initiation factor 3 subunit 5-2</fullName>
    </alternativeName>
</protein>
<organism>
    <name type="scientific">Drosophila melanogaster</name>
    <name type="common">Fruit fly</name>
    <dbReference type="NCBI Taxonomy" id="7227"/>
    <lineage>
        <taxon>Eukaryota</taxon>
        <taxon>Metazoa</taxon>
        <taxon>Ecdysozoa</taxon>
        <taxon>Arthropoda</taxon>
        <taxon>Hexapoda</taxon>
        <taxon>Insecta</taxon>
        <taxon>Pterygota</taxon>
        <taxon>Neoptera</taxon>
        <taxon>Endopterygota</taxon>
        <taxon>Diptera</taxon>
        <taxon>Brachycera</taxon>
        <taxon>Muscomorpha</taxon>
        <taxon>Ephydroidea</taxon>
        <taxon>Drosophilidae</taxon>
        <taxon>Drosophila</taxon>
        <taxon>Sophophora</taxon>
    </lineage>
</organism>